<comment type="subunit">
    <text evidence="3">Homodimer.</text>
</comment>
<comment type="interaction">
    <interactant intactId="EBI-15194255">
        <id>Q7XHI9</id>
    </interactant>
    <interactant intactId="EBI-15191993">
        <id>Q9LV17</id>
        <label>BHLH79</label>
    </interactant>
    <organismsDiffer>false</organismsDiffer>
    <experiments>3</experiments>
</comment>
<comment type="subcellular location">
    <subcellularLocation>
        <location evidence="1">Nucleus</location>
    </subcellularLocation>
</comment>
<comment type="alternative products">
    <event type="alternative splicing"/>
    <isoform>
        <id>Q7XHI9-1</id>
        <name>1</name>
        <sequence type="displayed"/>
    </isoform>
    <isoform>
        <id>Q7XHI9-2</id>
        <name>2</name>
        <sequence type="described" ref="VSP_036092 VSP_036093"/>
    </isoform>
</comment>
<comment type="similarity">
    <text evidence="3">Belongs to the bHLH protein family.</text>
</comment>
<comment type="sequence caution" evidence="3">
    <conflict type="erroneous gene model prediction">
        <sequence resource="EMBL-CDS" id="AAC24181"/>
    </conflict>
</comment>
<comment type="sequence caution" evidence="3">
    <conflict type="erroneous termination">
        <sequence resource="EMBL-CDS" id="ABK28492"/>
    </conflict>
    <text>Extended C-terminus.</text>
</comment>
<reference key="1">
    <citation type="journal article" date="2003" name="Mol. Biol. Evol.">
        <title>The basic helix-loop-helix transcription factor family in plants: a genome-wide study of protein structure and functional diversity.</title>
        <authorList>
            <person name="Heim M.A."/>
            <person name="Jakoby M."/>
            <person name="Werber M."/>
            <person name="Martin C."/>
            <person name="Weisshaar B."/>
            <person name="Bailey P.C."/>
        </authorList>
    </citation>
    <scope>NUCLEOTIDE SEQUENCE [MRNA] (ISOFORM 1)</scope>
    <scope>GENE FAMILY</scope>
    <scope>NOMENCLATURE</scope>
    <source>
        <strain>cv. Columbia</strain>
    </source>
</reference>
<reference key="2">
    <citation type="journal article" date="1999" name="Nature">
        <title>Sequence and analysis of chromosome 2 of the plant Arabidopsis thaliana.</title>
        <authorList>
            <person name="Lin X."/>
            <person name="Kaul S."/>
            <person name="Rounsley S.D."/>
            <person name="Shea T.P."/>
            <person name="Benito M.-I."/>
            <person name="Town C.D."/>
            <person name="Fujii C.Y."/>
            <person name="Mason T.M."/>
            <person name="Bowman C.L."/>
            <person name="Barnstead M.E."/>
            <person name="Feldblyum T.V."/>
            <person name="Buell C.R."/>
            <person name="Ketchum K.A."/>
            <person name="Lee J.J."/>
            <person name="Ronning C.M."/>
            <person name="Koo H.L."/>
            <person name="Moffat K.S."/>
            <person name="Cronin L.A."/>
            <person name="Shen M."/>
            <person name="Pai G."/>
            <person name="Van Aken S."/>
            <person name="Umayam L."/>
            <person name="Tallon L.J."/>
            <person name="Gill J.E."/>
            <person name="Adams M.D."/>
            <person name="Carrera A.J."/>
            <person name="Creasy T.H."/>
            <person name="Goodman H.M."/>
            <person name="Somerville C.R."/>
            <person name="Copenhaver G.P."/>
            <person name="Preuss D."/>
            <person name="Nierman W.C."/>
            <person name="White O."/>
            <person name="Eisen J.A."/>
            <person name="Salzberg S.L."/>
            <person name="Fraser C.M."/>
            <person name="Venter J.C."/>
        </authorList>
    </citation>
    <scope>NUCLEOTIDE SEQUENCE [LARGE SCALE GENOMIC DNA]</scope>
    <source>
        <strain>cv. Columbia</strain>
    </source>
</reference>
<reference key="3">
    <citation type="journal article" date="2017" name="Plant J.">
        <title>Araport11: a complete reannotation of the Arabidopsis thaliana reference genome.</title>
        <authorList>
            <person name="Cheng C.Y."/>
            <person name="Krishnakumar V."/>
            <person name="Chan A.P."/>
            <person name="Thibaud-Nissen F."/>
            <person name="Schobel S."/>
            <person name="Town C.D."/>
        </authorList>
    </citation>
    <scope>GENOME REANNOTATION</scope>
    <source>
        <strain>cv. Columbia</strain>
    </source>
</reference>
<reference key="4">
    <citation type="journal article" date="2006" name="Plant Biotechnol. J.">
        <title>Simultaneous high-throughput recombinational cloning of open reading frames in closed and open configurations.</title>
        <authorList>
            <person name="Underwood B.A."/>
            <person name="Vanderhaeghen R."/>
            <person name="Whitford R."/>
            <person name="Town C.D."/>
            <person name="Hilson P."/>
        </authorList>
    </citation>
    <scope>NUCLEOTIDE SEQUENCE [LARGE SCALE MRNA] (ISOFORM 1)</scope>
    <source>
        <strain>cv. Columbia</strain>
    </source>
</reference>
<accession>Q7XHI9</accession>
<accession>A0MEL3</accession>
<accession>O80976</accession>
<keyword id="KW-0025">Alternative splicing</keyword>
<keyword id="KW-0238">DNA-binding</keyword>
<keyword id="KW-0539">Nucleus</keyword>
<keyword id="KW-1185">Reference proteome</keyword>
<keyword id="KW-0804">Transcription</keyword>
<keyword id="KW-0805">Transcription regulation</keyword>
<feature type="chain" id="PRO_0000358776" description="Transcription factor bHLH84">
    <location>
        <begin position="1"/>
        <end position="328"/>
    </location>
</feature>
<feature type="domain" description="bHLH" evidence="1">
    <location>
        <begin position="243"/>
        <end position="292"/>
    </location>
</feature>
<feature type="region of interest" description="Disordered" evidence="2">
    <location>
        <begin position="145"/>
        <end position="248"/>
    </location>
</feature>
<feature type="compositionally biased region" description="Basic and acidic residues" evidence="2">
    <location>
        <begin position="220"/>
        <end position="229"/>
    </location>
</feature>
<feature type="splice variant" id="VSP_036092" description="In isoform 2." evidence="3">
    <original>KRRE</original>
    <variation>VIYT</variation>
    <location>
        <begin position="254"/>
        <end position="257"/>
    </location>
</feature>
<feature type="splice variant" id="VSP_036093" description="In isoform 2." evidence="3">
    <location>
        <begin position="258"/>
        <end position="328"/>
    </location>
</feature>
<name>BH084_ARATH</name>
<organism>
    <name type="scientific">Arabidopsis thaliana</name>
    <name type="common">Mouse-ear cress</name>
    <dbReference type="NCBI Taxonomy" id="3702"/>
    <lineage>
        <taxon>Eukaryota</taxon>
        <taxon>Viridiplantae</taxon>
        <taxon>Streptophyta</taxon>
        <taxon>Embryophyta</taxon>
        <taxon>Tracheophyta</taxon>
        <taxon>Spermatophyta</taxon>
        <taxon>Magnoliopsida</taxon>
        <taxon>eudicotyledons</taxon>
        <taxon>Gunneridae</taxon>
        <taxon>Pentapetalae</taxon>
        <taxon>rosids</taxon>
        <taxon>malvids</taxon>
        <taxon>Brassicales</taxon>
        <taxon>Brassicaceae</taxon>
        <taxon>Camelineae</taxon>
        <taxon>Arabidopsis</taxon>
    </lineage>
</organism>
<sequence length="328" mass="36500">MEAMGEWSTGLGGIYTEEADFMNQLLASYEQPCGGSSSETTATLTAYHHQGSQWNGGFCFSQESSSYSGYCAAMPRQEEDNNGMEDATINTNLYLVGEETSECDATEYSGKSLLPLETVAENHDHSMLQPENSLTTTTDEKMFNQCESSKKRTRATTTDKNKRANKARRSQKCVEMSGENENSGEEEYTEKAAGKRKTKPLKPQKTCCSDDESNGGDTFLSKEDGEDSKALNLNGKTRASRGAATDPQSLYARKRRERINERLRILQHLVPNGTKVDISTMLEEAVQYVKFLQLQIKLLSSDDLWMYAPIAYNGMDIGLDLKLNALTR</sequence>
<protein>
    <recommendedName>
        <fullName>Transcription factor bHLH84</fullName>
    </recommendedName>
    <alternativeName>
        <fullName>Basic helix-loop-helix protein 84</fullName>
        <shortName>AtbHLH84</shortName>
        <shortName>bHLH 84</shortName>
    </alternativeName>
    <alternativeName>
        <fullName>bHLH transcription factor bHLH084</fullName>
    </alternativeName>
</protein>
<evidence type="ECO:0000255" key="1">
    <source>
        <dbReference type="PROSITE-ProRule" id="PRU00981"/>
    </source>
</evidence>
<evidence type="ECO:0000256" key="2">
    <source>
        <dbReference type="SAM" id="MobiDB-lite"/>
    </source>
</evidence>
<evidence type="ECO:0000305" key="3"/>
<dbReference type="EMBL" id="AJ577584">
    <property type="protein sequence ID" value="CAE12171.1"/>
    <property type="molecule type" value="mRNA"/>
</dbReference>
<dbReference type="EMBL" id="AC004705">
    <property type="protein sequence ID" value="AAC24181.1"/>
    <property type="status" value="ALT_SEQ"/>
    <property type="molecule type" value="Genomic_DNA"/>
</dbReference>
<dbReference type="EMBL" id="CP002685">
    <property type="protein sequence ID" value="AEC06331.1"/>
    <property type="molecule type" value="Genomic_DNA"/>
</dbReference>
<dbReference type="EMBL" id="CP002685">
    <property type="protein sequence ID" value="AEC06332.1"/>
    <property type="molecule type" value="Genomic_DNA"/>
</dbReference>
<dbReference type="EMBL" id="DQ446497">
    <property type="protein sequence ID" value="ABE65812.1"/>
    <property type="molecule type" value="mRNA"/>
</dbReference>
<dbReference type="EMBL" id="DQ652985">
    <property type="protein sequence ID" value="ABK28492.1"/>
    <property type="status" value="ALT_SEQ"/>
    <property type="molecule type" value="mRNA"/>
</dbReference>
<dbReference type="PIR" id="T02600">
    <property type="entry name" value="T02600"/>
</dbReference>
<dbReference type="RefSeq" id="NP_001118318.1">
    <molecule id="Q7XHI9-2"/>
    <property type="nucleotide sequence ID" value="NM_001124846.2"/>
</dbReference>
<dbReference type="RefSeq" id="NP_179083.2">
    <molecule id="Q7XHI9-1"/>
    <property type="nucleotide sequence ID" value="NM_127040.4"/>
</dbReference>
<dbReference type="SMR" id="Q7XHI9"/>
<dbReference type="BioGRID" id="1323">
    <property type="interactions" value="10"/>
</dbReference>
<dbReference type="FunCoup" id="Q7XHI9">
    <property type="interactions" value="130"/>
</dbReference>
<dbReference type="IntAct" id="Q7XHI9">
    <property type="interactions" value="10"/>
</dbReference>
<dbReference type="STRING" id="3702.Q7XHI9"/>
<dbReference type="PaxDb" id="3702-AT2G14760.3"/>
<dbReference type="EnsemblPlants" id="AT2G14760.1">
    <molecule id="Q7XHI9-1"/>
    <property type="protein sequence ID" value="AT2G14760.1"/>
    <property type="gene ID" value="AT2G14760"/>
</dbReference>
<dbReference type="EnsemblPlants" id="AT2G14760.2">
    <molecule id="Q7XHI9-2"/>
    <property type="protein sequence ID" value="AT2G14760.2"/>
    <property type="gene ID" value="AT2G14760"/>
</dbReference>
<dbReference type="GeneID" id="815964"/>
<dbReference type="Gramene" id="AT2G14760.1">
    <molecule id="Q7XHI9-1"/>
    <property type="protein sequence ID" value="AT2G14760.1"/>
    <property type="gene ID" value="AT2G14760"/>
</dbReference>
<dbReference type="Gramene" id="AT2G14760.2">
    <molecule id="Q7XHI9-2"/>
    <property type="protein sequence ID" value="AT2G14760.2"/>
    <property type="gene ID" value="AT2G14760"/>
</dbReference>
<dbReference type="KEGG" id="ath:AT2G14760"/>
<dbReference type="Araport" id="AT2G14760"/>
<dbReference type="TAIR" id="AT2G14760"/>
<dbReference type="eggNOG" id="ENOG502R684">
    <property type="taxonomic scope" value="Eukaryota"/>
</dbReference>
<dbReference type="HOGENOM" id="CLU_066110_1_0_1"/>
<dbReference type="InParanoid" id="Q7XHI9"/>
<dbReference type="OMA" id="KLFNPCE"/>
<dbReference type="PhylomeDB" id="Q7XHI9"/>
<dbReference type="PRO" id="PR:Q7XHI9"/>
<dbReference type="Proteomes" id="UP000006548">
    <property type="component" value="Chromosome 2"/>
</dbReference>
<dbReference type="ExpressionAtlas" id="Q7XHI9">
    <property type="expression patterns" value="baseline and differential"/>
</dbReference>
<dbReference type="GO" id="GO:0005634">
    <property type="term" value="C:nucleus"/>
    <property type="evidence" value="ECO:0007669"/>
    <property type="project" value="UniProtKB-SubCell"/>
</dbReference>
<dbReference type="GO" id="GO:0003677">
    <property type="term" value="F:DNA binding"/>
    <property type="evidence" value="ECO:0007669"/>
    <property type="project" value="UniProtKB-KW"/>
</dbReference>
<dbReference type="GO" id="GO:0003700">
    <property type="term" value="F:DNA-binding transcription factor activity"/>
    <property type="evidence" value="ECO:0007669"/>
    <property type="project" value="InterPro"/>
</dbReference>
<dbReference type="GO" id="GO:0046983">
    <property type="term" value="F:protein dimerization activity"/>
    <property type="evidence" value="ECO:0007669"/>
    <property type="project" value="InterPro"/>
</dbReference>
<dbReference type="CDD" id="cd11454">
    <property type="entry name" value="bHLH_AtIND_like"/>
    <property type="match status" value="1"/>
</dbReference>
<dbReference type="FunFam" id="4.10.280.10:FF:000022">
    <property type="entry name" value="Basic helix-loop-helix transcription factor"/>
    <property type="match status" value="1"/>
</dbReference>
<dbReference type="Gene3D" id="4.10.280.10">
    <property type="entry name" value="Helix-loop-helix DNA-binding domain"/>
    <property type="match status" value="1"/>
</dbReference>
<dbReference type="InterPro" id="IPR011598">
    <property type="entry name" value="bHLH_dom"/>
</dbReference>
<dbReference type="InterPro" id="IPR036638">
    <property type="entry name" value="HLH_DNA-bd_sf"/>
</dbReference>
<dbReference type="InterPro" id="IPR045843">
    <property type="entry name" value="IND-like"/>
</dbReference>
<dbReference type="PANTHER" id="PTHR16223">
    <property type="entry name" value="TRANSCRIPTION FACTOR BHLH83-RELATED"/>
    <property type="match status" value="1"/>
</dbReference>
<dbReference type="PANTHER" id="PTHR16223:SF274">
    <property type="entry name" value="TRANSCRIPTION FACTOR BHLH84"/>
    <property type="match status" value="1"/>
</dbReference>
<dbReference type="Pfam" id="PF00010">
    <property type="entry name" value="HLH"/>
    <property type="match status" value="1"/>
</dbReference>
<dbReference type="SMART" id="SM00353">
    <property type="entry name" value="HLH"/>
    <property type="match status" value="1"/>
</dbReference>
<dbReference type="SUPFAM" id="SSF47459">
    <property type="entry name" value="HLH, helix-loop-helix DNA-binding domain"/>
    <property type="match status" value="1"/>
</dbReference>
<dbReference type="PROSITE" id="PS50888">
    <property type="entry name" value="BHLH"/>
    <property type="match status" value="1"/>
</dbReference>
<gene>
    <name type="primary">BHLH84</name>
    <name type="ordered locus">At2g14760</name>
    <name type="ORF">F26C24.10</name>
</gene>
<proteinExistence type="evidence at protein level"/>